<organism>
    <name type="scientific">Clostridioides difficile (strain 630)</name>
    <name type="common">Peptoclostridium difficile</name>
    <dbReference type="NCBI Taxonomy" id="272563"/>
    <lineage>
        <taxon>Bacteria</taxon>
        <taxon>Bacillati</taxon>
        <taxon>Bacillota</taxon>
        <taxon>Clostridia</taxon>
        <taxon>Peptostreptococcales</taxon>
        <taxon>Peptostreptococcaceae</taxon>
        <taxon>Clostridioides</taxon>
    </lineage>
</organism>
<evidence type="ECO:0000255" key="1">
    <source>
        <dbReference type="HAMAP-Rule" id="MF_01631"/>
    </source>
</evidence>
<accession>Q181B4</accession>
<sequence length="459" mass="50368">MNFKAIILAAGKGTRMKSKYPKVIHKVCGKEMVNHIIDVSKKSGVKDTVVILGHEADVVKEKLAEEIIIAMQTEQLGTGHAVKMAKEYINDEDTIVVLCGDTPLIKEETLKRLFEYHIENKYHATVLTTRVGNPTGYGRIIRDKKGDLLKIVEQKDANSEEKMISEINSGIYCFNGKSLREALDLLNNNNSQGEYYLTDTAKIMRDKGLKVGAFAGSTIEELMGVNSRVELSKAEEIMRRRINESHMVNGVTIIDTNSTYIESDVMIGNDTIIYPGVMLQGKTRIGSDCIIGMNSSITNSEIGDGTEIKNSTIIDSKVGENSTVGPYAYLRPKSDLGNNVKIGDFVEVKNAIIEDGSKASHLSYIGDAHVGKNVNIGCGVVFVNYDGKNKFKSIVKDNAFIGSNSNLVAPVVVEEKGYIATGSTITHDVPDGALAIARERQVIKEGWVEKKNQKDDQSK</sequence>
<comment type="function">
    <text evidence="1">Catalyzes the last two sequential reactions in the de novo biosynthetic pathway for UDP-N-acetylglucosamine (UDP-GlcNAc). The C-terminal domain catalyzes the transfer of acetyl group from acetyl coenzyme A to glucosamine-1-phosphate (GlcN-1-P) to produce N-acetylglucosamine-1-phosphate (GlcNAc-1-P), which is converted into UDP-GlcNAc by the transfer of uridine 5-monophosphate (from uridine 5-triphosphate), a reaction catalyzed by the N-terminal domain.</text>
</comment>
<comment type="catalytic activity">
    <reaction evidence="1">
        <text>alpha-D-glucosamine 1-phosphate + acetyl-CoA = N-acetyl-alpha-D-glucosamine 1-phosphate + CoA + H(+)</text>
        <dbReference type="Rhea" id="RHEA:13725"/>
        <dbReference type="ChEBI" id="CHEBI:15378"/>
        <dbReference type="ChEBI" id="CHEBI:57287"/>
        <dbReference type="ChEBI" id="CHEBI:57288"/>
        <dbReference type="ChEBI" id="CHEBI:57776"/>
        <dbReference type="ChEBI" id="CHEBI:58516"/>
        <dbReference type="EC" id="2.3.1.157"/>
    </reaction>
</comment>
<comment type="catalytic activity">
    <reaction evidence="1">
        <text>N-acetyl-alpha-D-glucosamine 1-phosphate + UTP + H(+) = UDP-N-acetyl-alpha-D-glucosamine + diphosphate</text>
        <dbReference type="Rhea" id="RHEA:13509"/>
        <dbReference type="ChEBI" id="CHEBI:15378"/>
        <dbReference type="ChEBI" id="CHEBI:33019"/>
        <dbReference type="ChEBI" id="CHEBI:46398"/>
        <dbReference type="ChEBI" id="CHEBI:57705"/>
        <dbReference type="ChEBI" id="CHEBI:57776"/>
        <dbReference type="EC" id="2.7.7.23"/>
    </reaction>
</comment>
<comment type="cofactor">
    <cofactor evidence="1">
        <name>Mg(2+)</name>
        <dbReference type="ChEBI" id="CHEBI:18420"/>
    </cofactor>
    <text evidence="1">Binds 1 Mg(2+) ion per subunit.</text>
</comment>
<comment type="pathway">
    <text evidence="1">Nucleotide-sugar biosynthesis; UDP-N-acetyl-alpha-D-glucosamine biosynthesis; N-acetyl-alpha-D-glucosamine 1-phosphate from alpha-D-glucosamine 6-phosphate (route II): step 2/2.</text>
</comment>
<comment type="pathway">
    <text evidence="1">Nucleotide-sugar biosynthesis; UDP-N-acetyl-alpha-D-glucosamine biosynthesis; UDP-N-acetyl-alpha-D-glucosamine from N-acetyl-alpha-D-glucosamine 1-phosphate: step 1/1.</text>
</comment>
<comment type="pathway">
    <text evidence="1">Bacterial outer membrane biogenesis; LPS lipid A biosynthesis.</text>
</comment>
<comment type="subunit">
    <text evidence="1">Homotrimer.</text>
</comment>
<comment type="subcellular location">
    <subcellularLocation>
        <location evidence="1">Cytoplasm</location>
    </subcellularLocation>
</comment>
<comment type="similarity">
    <text evidence="1">In the N-terminal section; belongs to the N-acetylglucosamine-1-phosphate uridyltransferase family.</text>
</comment>
<comment type="similarity">
    <text evidence="1">In the C-terminal section; belongs to the transferase hexapeptide repeat family.</text>
</comment>
<keyword id="KW-0012">Acyltransferase</keyword>
<keyword id="KW-0133">Cell shape</keyword>
<keyword id="KW-0961">Cell wall biogenesis/degradation</keyword>
<keyword id="KW-0963">Cytoplasm</keyword>
<keyword id="KW-0460">Magnesium</keyword>
<keyword id="KW-0479">Metal-binding</keyword>
<keyword id="KW-0511">Multifunctional enzyme</keyword>
<keyword id="KW-0548">Nucleotidyltransferase</keyword>
<keyword id="KW-0573">Peptidoglycan synthesis</keyword>
<keyword id="KW-1185">Reference proteome</keyword>
<keyword id="KW-0677">Repeat</keyword>
<keyword id="KW-0808">Transferase</keyword>
<gene>
    <name evidence="1" type="primary">glmU</name>
    <name type="ordered locus">CD630_35150</name>
</gene>
<name>GLMU_CLOD6</name>
<reference key="1">
    <citation type="journal article" date="2006" name="Nat. Genet.">
        <title>The multidrug-resistant human pathogen Clostridium difficile has a highly mobile, mosaic genome.</title>
        <authorList>
            <person name="Sebaihia M."/>
            <person name="Wren B.W."/>
            <person name="Mullany P."/>
            <person name="Fairweather N.F."/>
            <person name="Minton N."/>
            <person name="Stabler R."/>
            <person name="Thomson N.R."/>
            <person name="Roberts A.P."/>
            <person name="Cerdeno-Tarraga A.M."/>
            <person name="Wang H."/>
            <person name="Holden M.T.G."/>
            <person name="Wright A."/>
            <person name="Churcher C."/>
            <person name="Quail M.A."/>
            <person name="Baker S."/>
            <person name="Bason N."/>
            <person name="Brooks K."/>
            <person name="Chillingworth T."/>
            <person name="Cronin A."/>
            <person name="Davis P."/>
            <person name="Dowd L."/>
            <person name="Fraser A."/>
            <person name="Feltwell T."/>
            <person name="Hance Z."/>
            <person name="Holroyd S."/>
            <person name="Jagels K."/>
            <person name="Moule S."/>
            <person name="Mungall K."/>
            <person name="Price C."/>
            <person name="Rabbinowitsch E."/>
            <person name="Sharp S."/>
            <person name="Simmonds M."/>
            <person name="Stevens K."/>
            <person name="Unwin L."/>
            <person name="Whithead S."/>
            <person name="Dupuy B."/>
            <person name="Dougan G."/>
            <person name="Barrell B."/>
            <person name="Parkhill J."/>
        </authorList>
    </citation>
    <scope>NUCLEOTIDE SEQUENCE [LARGE SCALE GENOMIC DNA]</scope>
    <source>
        <strain>630</strain>
    </source>
</reference>
<dbReference type="EC" id="2.7.7.23" evidence="1"/>
<dbReference type="EC" id="2.3.1.157" evidence="1"/>
<dbReference type="EMBL" id="AM180355">
    <property type="protein sequence ID" value="CAJ70419.1"/>
    <property type="molecule type" value="Genomic_DNA"/>
</dbReference>
<dbReference type="RefSeq" id="WP_009898727.1">
    <property type="nucleotide sequence ID" value="NZ_JAUPES010000009.1"/>
</dbReference>
<dbReference type="RefSeq" id="YP_001090036.1">
    <property type="nucleotide sequence ID" value="NC_009089.1"/>
</dbReference>
<dbReference type="SMR" id="Q181B4"/>
<dbReference type="STRING" id="272563.CD630_35150"/>
<dbReference type="EnsemblBacteria" id="CAJ70419">
    <property type="protein sequence ID" value="CAJ70419"/>
    <property type="gene ID" value="CD630_35150"/>
</dbReference>
<dbReference type="GeneID" id="66355977"/>
<dbReference type="KEGG" id="cdf:CD630_35150"/>
<dbReference type="KEGG" id="pdc:CDIF630_03829"/>
<dbReference type="PATRIC" id="fig|272563.120.peg.3715"/>
<dbReference type="eggNOG" id="COG1207">
    <property type="taxonomic scope" value="Bacteria"/>
</dbReference>
<dbReference type="OrthoDB" id="9775031at2"/>
<dbReference type="PhylomeDB" id="Q181B4"/>
<dbReference type="BioCyc" id="PDIF272563:G12WB-3696-MONOMER"/>
<dbReference type="UniPathway" id="UPA00113">
    <property type="reaction ID" value="UER00532"/>
</dbReference>
<dbReference type="UniPathway" id="UPA00113">
    <property type="reaction ID" value="UER00533"/>
</dbReference>
<dbReference type="UniPathway" id="UPA00973"/>
<dbReference type="Proteomes" id="UP000001978">
    <property type="component" value="Chromosome"/>
</dbReference>
<dbReference type="GO" id="GO:0005737">
    <property type="term" value="C:cytoplasm"/>
    <property type="evidence" value="ECO:0007669"/>
    <property type="project" value="UniProtKB-SubCell"/>
</dbReference>
<dbReference type="GO" id="GO:0016020">
    <property type="term" value="C:membrane"/>
    <property type="evidence" value="ECO:0007669"/>
    <property type="project" value="GOC"/>
</dbReference>
<dbReference type="GO" id="GO:0019134">
    <property type="term" value="F:glucosamine-1-phosphate N-acetyltransferase activity"/>
    <property type="evidence" value="ECO:0007669"/>
    <property type="project" value="UniProtKB-UniRule"/>
</dbReference>
<dbReference type="GO" id="GO:0000287">
    <property type="term" value="F:magnesium ion binding"/>
    <property type="evidence" value="ECO:0007669"/>
    <property type="project" value="UniProtKB-UniRule"/>
</dbReference>
<dbReference type="GO" id="GO:0003977">
    <property type="term" value="F:UDP-N-acetylglucosamine diphosphorylase activity"/>
    <property type="evidence" value="ECO:0007669"/>
    <property type="project" value="UniProtKB-UniRule"/>
</dbReference>
<dbReference type="GO" id="GO:0000902">
    <property type="term" value="P:cell morphogenesis"/>
    <property type="evidence" value="ECO:0007669"/>
    <property type="project" value="UniProtKB-UniRule"/>
</dbReference>
<dbReference type="GO" id="GO:0071555">
    <property type="term" value="P:cell wall organization"/>
    <property type="evidence" value="ECO:0007669"/>
    <property type="project" value="UniProtKB-KW"/>
</dbReference>
<dbReference type="GO" id="GO:0009245">
    <property type="term" value="P:lipid A biosynthetic process"/>
    <property type="evidence" value="ECO:0007669"/>
    <property type="project" value="UniProtKB-UniRule"/>
</dbReference>
<dbReference type="GO" id="GO:0009252">
    <property type="term" value="P:peptidoglycan biosynthetic process"/>
    <property type="evidence" value="ECO:0007669"/>
    <property type="project" value="UniProtKB-UniRule"/>
</dbReference>
<dbReference type="GO" id="GO:0008360">
    <property type="term" value="P:regulation of cell shape"/>
    <property type="evidence" value="ECO:0007669"/>
    <property type="project" value="UniProtKB-KW"/>
</dbReference>
<dbReference type="GO" id="GO:0006048">
    <property type="term" value="P:UDP-N-acetylglucosamine biosynthetic process"/>
    <property type="evidence" value="ECO:0007669"/>
    <property type="project" value="UniProtKB-UniPathway"/>
</dbReference>
<dbReference type="CDD" id="cd02540">
    <property type="entry name" value="GT2_GlmU_N_bac"/>
    <property type="match status" value="1"/>
</dbReference>
<dbReference type="CDD" id="cd03353">
    <property type="entry name" value="LbH_GlmU_C"/>
    <property type="match status" value="1"/>
</dbReference>
<dbReference type="Gene3D" id="2.160.10.10">
    <property type="entry name" value="Hexapeptide repeat proteins"/>
    <property type="match status" value="1"/>
</dbReference>
<dbReference type="Gene3D" id="3.90.550.10">
    <property type="entry name" value="Spore Coat Polysaccharide Biosynthesis Protein SpsA, Chain A"/>
    <property type="match status" value="1"/>
</dbReference>
<dbReference type="HAMAP" id="MF_01631">
    <property type="entry name" value="GlmU"/>
    <property type="match status" value="1"/>
</dbReference>
<dbReference type="InterPro" id="IPR005882">
    <property type="entry name" value="Bifunctional_GlmU"/>
</dbReference>
<dbReference type="InterPro" id="IPR050065">
    <property type="entry name" value="GlmU-like"/>
</dbReference>
<dbReference type="InterPro" id="IPR038009">
    <property type="entry name" value="GlmU_C_LbH"/>
</dbReference>
<dbReference type="InterPro" id="IPR001451">
    <property type="entry name" value="Hexapep"/>
</dbReference>
<dbReference type="InterPro" id="IPR005835">
    <property type="entry name" value="NTP_transferase_dom"/>
</dbReference>
<dbReference type="InterPro" id="IPR029044">
    <property type="entry name" value="Nucleotide-diphossugar_trans"/>
</dbReference>
<dbReference type="InterPro" id="IPR011004">
    <property type="entry name" value="Trimer_LpxA-like_sf"/>
</dbReference>
<dbReference type="NCBIfam" id="TIGR01173">
    <property type="entry name" value="glmU"/>
    <property type="match status" value="1"/>
</dbReference>
<dbReference type="NCBIfam" id="NF010934">
    <property type="entry name" value="PRK14354.1"/>
    <property type="match status" value="1"/>
</dbReference>
<dbReference type="PANTHER" id="PTHR43584:SF3">
    <property type="entry name" value="BIFUNCTIONAL PROTEIN GLMU"/>
    <property type="match status" value="1"/>
</dbReference>
<dbReference type="PANTHER" id="PTHR43584">
    <property type="entry name" value="NUCLEOTIDYL TRANSFERASE"/>
    <property type="match status" value="1"/>
</dbReference>
<dbReference type="Pfam" id="PF00132">
    <property type="entry name" value="Hexapep"/>
    <property type="match status" value="1"/>
</dbReference>
<dbReference type="Pfam" id="PF00483">
    <property type="entry name" value="NTP_transferase"/>
    <property type="match status" value="1"/>
</dbReference>
<dbReference type="SUPFAM" id="SSF53448">
    <property type="entry name" value="Nucleotide-diphospho-sugar transferases"/>
    <property type="match status" value="1"/>
</dbReference>
<dbReference type="SUPFAM" id="SSF51161">
    <property type="entry name" value="Trimeric LpxA-like enzymes"/>
    <property type="match status" value="1"/>
</dbReference>
<proteinExistence type="inferred from homology"/>
<feature type="chain" id="PRO_0000263123" description="Bifunctional protein GlmU">
    <location>
        <begin position="1"/>
        <end position="459"/>
    </location>
</feature>
<feature type="region of interest" description="Pyrophosphorylase" evidence="1">
    <location>
        <begin position="1"/>
        <end position="228"/>
    </location>
</feature>
<feature type="region of interest" description="Linker" evidence="1">
    <location>
        <begin position="229"/>
        <end position="249"/>
    </location>
</feature>
<feature type="region of interest" description="N-acetyltransferase" evidence="1">
    <location>
        <begin position="250"/>
        <end position="459"/>
    </location>
</feature>
<feature type="active site" description="Proton acceptor" evidence="1">
    <location>
        <position position="361"/>
    </location>
</feature>
<feature type="binding site" evidence="1">
    <location>
        <begin position="8"/>
        <end position="11"/>
    </location>
    <ligand>
        <name>UDP-N-acetyl-alpha-D-glucosamine</name>
        <dbReference type="ChEBI" id="CHEBI:57705"/>
    </ligand>
</feature>
<feature type="binding site" evidence="1">
    <location>
        <position position="22"/>
    </location>
    <ligand>
        <name>UDP-N-acetyl-alpha-D-glucosamine</name>
        <dbReference type="ChEBI" id="CHEBI:57705"/>
    </ligand>
</feature>
<feature type="binding site" evidence="1">
    <location>
        <position position="72"/>
    </location>
    <ligand>
        <name>UDP-N-acetyl-alpha-D-glucosamine</name>
        <dbReference type="ChEBI" id="CHEBI:57705"/>
    </ligand>
</feature>
<feature type="binding site" evidence="1">
    <location>
        <begin position="77"/>
        <end position="78"/>
    </location>
    <ligand>
        <name>UDP-N-acetyl-alpha-D-glucosamine</name>
        <dbReference type="ChEBI" id="CHEBI:57705"/>
    </ligand>
</feature>
<feature type="binding site" evidence="1">
    <location>
        <position position="101"/>
    </location>
    <ligand>
        <name>Mg(2+)</name>
        <dbReference type="ChEBI" id="CHEBI:18420"/>
    </ligand>
</feature>
<feature type="binding site" evidence="1">
    <location>
        <position position="138"/>
    </location>
    <ligand>
        <name>UDP-N-acetyl-alpha-D-glucosamine</name>
        <dbReference type="ChEBI" id="CHEBI:57705"/>
    </ligand>
</feature>
<feature type="binding site" evidence="1">
    <location>
        <position position="153"/>
    </location>
    <ligand>
        <name>UDP-N-acetyl-alpha-D-glucosamine</name>
        <dbReference type="ChEBI" id="CHEBI:57705"/>
    </ligand>
</feature>
<feature type="binding site" evidence="1">
    <location>
        <position position="168"/>
    </location>
    <ligand>
        <name>UDP-N-acetyl-alpha-D-glucosamine</name>
        <dbReference type="ChEBI" id="CHEBI:57705"/>
    </ligand>
</feature>
<feature type="binding site" evidence="1">
    <location>
        <position position="226"/>
    </location>
    <ligand>
        <name>Mg(2+)</name>
        <dbReference type="ChEBI" id="CHEBI:18420"/>
    </ligand>
</feature>
<feature type="binding site" evidence="1">
    <location>
        <position position="226"/>
    </location>
    <ligand>
        <name>UDP-N-acetyl-alpha-D-glucosamine</name>
        <dbReference type="ChEBI" id="CHEBI:57705"/>
    </ligand>
</feature>
<feature type="binding site" evidence="1">
    <location>
        <position position="331"/>
    </location>
    <ligand>
        <name>UDP-N-acetyl-alpha-D-glucosamine</name>
        <dbReference type="ChEBI" id="CHEBI:57705"/>
    </ligand>
</feature>
<feature type="binding site" evidence="1">
    <location>
        <position position="349"/>
    </location>
    <ligand>
        <name>UDP-N-acetyl-alpha-D-glucosamine</name>
        <dbReference type="ChEBI" id="CHEBI:57705"/>
    </ligand>
</feature>
<feature type="binding site" evidence="1">
    <location>
        <position position="364"/>
    </location>
    <ligand>
        <name>UDP-N-acetyl-alpha-D-glucosamine</name>
        <dbReference type="ChEBI" id="CHEBI:57705"/>
    </ligand>
</feature>
<feature type="binding site" evidence="1">
    <location>
        <position position="375"/>
    </location>
    <ligand>
        <name>UDP-N-acetyl-alpha-D-glucosamine</name>
        <dbReference type="ChEBI" id="CHEBI:57705"/>
    </ligand>
</feature>
<feature type="binding site" evidence="1">
    <location>
        <begin position="384"/>
        <end position="385"/>
    </location>
    <ligand>
        <name>acetyl-CoA</name>
        <dbReference type="ChEBI" id="CHEBI:57288"/>
    </ligand>
</feature>
<feature type="binding site" evidence="1">
    <location>
        <position position="403"/>
    </location>
    <ligand>
        <name>acetyl-CoA</name>
        <dbReference type="ChEBI" id="CHEBI:57288"/>
    </ligand>
</feature>
<feature type="binding site" evidence="1">
    <location>
        <position position="421"/>
    </location>
    <ligand>
        <name>acetyl-CoA</name>
        <dbReference type="ChEBI" id="CHEBI:57288"/>
    </ligand>
</feature>
<feature type="binding site" evidence="1">
    <location>
        <position position="438"/>
    </location>
    <ligand>
        <name>acetyl-CoA</name>
        <dbReference type="ChEBI" id="CHEBI:57288"/>
    </ligand>
</feature>
<protein>
    <recommendedName>
        <fullName evidence="1">Bifunctional protein GlmU</fullName>
    </recommendedName>
    <domain>
        <recommendedName>
            <fullName evidence="1">UDP-N-acetylglucosamine pyrophosphorylase</fullName>
            <ecNumber evidence="1">2.7.7.23</ecNumber>
        </recommendedName>
        <alternativeName>
            <fullName evidence="1">N-acetylglucosamine-1-phosphate uridyltransferase</fullName>
        </alternativeName>
    </domain>
    <domain>
        <recommendedName>
            <fullName evidence="1">Glucosamine-1-phosphate N-acetyltransferase</fullName>
            <ecNumber evidence="1">2.3.1.157</ecNumber>
        </recommendedName>
    </domain>
</protein>